<gene>
    <name type="primary">ENO1</name>
</gene>
<evidence type="ECO:0000250" key="1"/>
<evidence type="ECO:0000305" key="2"/>
<accession>P51913</accession>
<proteinExistence type="evidence at transcript level"/>
<protein>
    <recommendedName>
        <fullName>Alpha-enolase</fullName>
        <ecNumber>4.2.1.11</ecNumber>
    </recommendedName>
    <alternativeName>
        <fullName>2-phospho-D-glycerate hydro-lyase</fullName>
    </alternativeName>
    <alternativeName>
        <fullName>Phosphopyruvate hydratase</fullName>
    </alternativeName>
</protein>
<reference key="1">
    <citation type="journal article" date="1995" name="J. Biochem.">
        <title>Chicken alpha-enolase but not beta-enolase has a Src-dependent tyrosine-phosphorylation site: cDNA cloning and nucleotide sequence analysis.</title>
        <authorList>
            <person name="Tanaka M."/>
            <person name="Maeda K."/>
            <person name="Nakashima K."/>
        </authorList>
    </citation>
    <scope>NUCLEOTIDE SEQUENCE [MRNA]</scope>
    <source>
        <strain>White leghorn</strain>
        <tissue>Kidney</tissue>
    </source>
</reference>
<organism>
    <name type="scientific">Gallus gallus</name>
    <name type="common">Chicken</name>
    <dbReference type="NCBI Taxonomy" id="9031"/>
    <lineage>
        <taxon>Eukaryota</taxon>
        <taxon>Metazoa</taxon>
        <taxon>Chordata</taxon>
        <taxon>Craniata</taxon>
        <taxon>Vertebrata</taxon>
        <taxon>Euteleostomi</taxon>
        <taxon>Archelosauria</taxon>
        <taxon>Archosauria</taxon>
        <taxon>Dinosauria</taxon>
        <taxon>Saurischia</taxon>
        <taxon>Theropoda</taxon>
        <taxon>Coelurosauria</taxon>
        <taxon>Aves</taxon>
        <taxon>Neognathae</taxon>
        <taxon>Galloanserae</taxon>
        <taxon>Galliformes</taxon>
        <taxon>Phasianidae</taxon>
        <taxon>Phasianinae</taxon>
        <taxon>Gallus</taxon>
    </lineage>
</organism>
<sequence>MSILKIHAREIFDSRGNPTVEVDLYTNKGLFRAAVPSGASTGIYEALELRDNDKTRYLGKGVSKAVEHVNKTIAPALISKNVNVVEQEKIDKLMLEMDGTENKSKFGANAILGVSLAVCKAGAAEKGVPLYRHIADLAGNPEVILPVPAFNVINGGSHAGNKLAMQEFMILPVGADTFKEAMRIGAEVYHNLKNVIKEKYGKDATNVGDEGGFAPNILENKEALELLKTAIGKAGYSDKVVIGMDVAASEFYRDGKYDLDFKSPDDPSRYISPDQLADLYLGFVKNYPVVSIEDPFDQDDWAAWKKFTASVGIQVVGDDLTVTNPKRIAKAVEEKSCNCLLLKVNQIGSVTESLQACKLAQSNGWGVMVSHRSGETEDTFIADLVVGLCTGQIKTGAPCRSERLAKYNQLLRIEEELGSKARFAGRNFRNPRIN</sequence>
<keyword id="KW-0963">Cytoplasm</keyword>
<keyword id="KW-0324">Glycolysis</keyword>
<keyword id="KW-0456">Lyase</keyword>
<keyword id="KW-0460">Magnesium</keyword>
<keyword id="KW-0479">Metal-binding</keyword>
<keyword id="KW-1185">Reference proteome</keyword>
<name>ENOA_CHICK</name>
<comment type="catalytic activity">
    <reaction>
        <text>(2R)-2-phosphoglycerate = phosphoenolpyruvate + H2O</text>
        <dbReference type="Rhea" id="RHEA:10164"/>
        <dbReference type="ChEBI" id="CHEBI:15377"/>
        <dbReference type="ChEBI" id="CHEBI:58289"/>
        <dbReference type="ChEBI" id="CHEBI:58702"/>
        <dbReference type="EC" id="4.2.1.11"/>
    </reaction>
</comment>
<comment type="cofactor">
    <cofactor evidence="1">
        <name>Mg(2+)</name>
        <dbReference type="ChEBI" id="CHEBI:18420"/>
    </cofactor>
    <text evidence="1">Binds two Mg(2+) per subunit. Required for catalysis and for stabilizing the dimer.</text>
</comment>
<comment type="pathway">
    <text>Carbohydrate degradation; glycolysis; pyruvate from D-glyceraldehyde 3-phosphate: step 4/5.</text>
</comment>
<comment type="subunit">
    <text evidence="1">Homodimer.</text>
</comment>
<comment type="subcellular location">
    <subcellularLocation>
        <location>Cytoplasm</location>
    </subcellularLocation>
</comment>
<comment type="similarity">
    <text evidence="2">Belongs to the enolase family.</text>
</comment>
<feature type="initiator methionine" description="Removed" evidence="1">
    <location>
        <position position="1"/>
    </location>
</feature>
<feature type="chain" id="PRO_0000134101" description="Alpha-enolase">
    <location>
        <begin position="2"/>
        <end position="434"/>
    </location>
</feature>
<feature type="active site" description="Proton donor" evidence="1">
    <location>
        <position position="210"/>
    </location>
</feature>
<feature type="active site" description="Proton acceptor" evidence="1">
    <location>
        <position position="343"/>
    </location>
</feature>
<feature type="binding site" evidence="1">
    <location>
        <position position="40"/>
    </location>
    <ligand>
        <name>Mg(2+)</name>
        <dbReference type="ChEBI" id="CHEBI:18420"/>
        <label>1</label>
    </ligand>
</feature>
<feature type="binding site" evidence="1">
    <location>
        <position position="158"/>
    </location>
    <ligand>
        <name>substrate</name>
    </ligand>
</feature>
<feature type="binding site" evidence="1">
    <location>
        <position position="167"/>
    </location>
    <ligand>
        <name>substrate</name>
    </ligand>
</feature>
<feature type="binding site" evidence="1">
    <location>
        <position position="245"/>
    </location>
    <ligand>
        <name>Mg(2+)</name>
        <dbReference type="ChEBI" id="CHEBI:18420"/>
        <label>2</label>
    </ligand>
</feature>
<feature type="binding site" evidence="1">
    <location>
        <position position="293"/>
    </location>
    <ligand>
        <name>Mg(2+)</name>
        <dbReference type="ChEBI" id="CHEBI:18420"/>
        <label>2</label>
    </ligand>
</feature>
<feature type="binding site" evidence="1">
    <location>
        <position position="293"/>
    </location>
    <ligand>
        <name>substrate</name>
    </ligand>
</feature>
<feature type="binding site" evidence="1">
    <location>
        <position position="318"/>
    </location>
    <ligand>
        <name>Mg(2+)</name>
        <dbReference type="ChEBI" id="CHEBI:18420"/>
        <label>2</label>
    </ligand>
</feature>
<feature type="binding site" evidence="1">
    <location>
        <position position="318"/>
    </location>
    <ligand>
        <name>substrate</name>
    </ligand>
</feature>
<feature type="binding site" evidence="1">
    <location>
        <begin position="370"/>
        <end position="373"/>
    </location>
    <ligand>
        <name>substrate</name>
    </ligand>
</feature>
<feature type="binding site" evidence="1">
    <location>
        <position position="394"/>
    </location>
    <ligand>
        <name>substrate</name>
    </ligand>
</feature>
<dbReference type="EC" id="4.2.1.11"/>
<dbReference type="EMBL" id="D37900">
    <property type="protein sequence ID" value="BAA07132.1"/>
    <property type="molecule type" value="mRNA"/>
</dbReference>
<dbReference type="PIR" id="JC4186">
    <property type="entry name" value="JC4186"/>
</dbReference>
<dbReference type="RefSeq" id="NP_990451.1">
    <property type="nucleotide sequence ID" value="NM_205120.1"/>
</dbReference>
<dbReference type="SMR" id="P51913"/>
<dbReference type="BioGRID" id="676287">
    <property type="interactions" value="3"/>
</dbReference>
<dbReference type="FunCoup" id="P51913">
    <property type="interactions" value="2003"/>
</dbReference>
<dbReference type="IntAct" id="P51913">
    <property type="interactions" value="1"/>
</dbReference>
<dbReference type="STRING" id="9031.ENSGALP00000060414"/>
<dbReference type="iPTMnet" id="P51913"/>
<dbReference type="PaxDb" id="9031-ENSGALP00000003737"/>
<dbReference type="GeneID" id="396017"/>
<dbReference type="KEGG" id="gga:396017"/>
<dbReference type="CTD" id="2023"/>
<dbReference type="VEuPathDB" id="HostDB:geneid_396017"/>
<dbReference type="eggNOG" id="KOG2670">
    <property type="taxonomic scope" value="Eukaryota"/>
</dbReference>
<dbReference type="InParanoid" id="P51913"/>
<dbReference type="OrthoDB" id="1739814at2759"/>
<dbReference type="PhylomeDB" id="P51913"/>
<dbReference type="Reactome" id="R-GGA-352875">
    <property type="pathway name" value="Gluconeogenesis"/>
</dbReference>
<dbReference type="Reactome" id="R-GGA-352882">
    <property type="pathway name" value="Glycolysis"/>
</dbReference>
<dbReference type="UniPathway" id="UPA00109">
    <property type="reaction ID" value="UER00187"/>
</dbReference>
<dbReference type="PRO" id="PR:P51913"/>
<dbReference type="Proteomes" id="UP000000539">
    <property type="component" value="Unassembled WGS sequence"/>
</dbReference>
<dbReference type="GO" id="GO:0005829">
    <property type="term" value="C:cytosol"/>
    <property type="evidence" value="ECO:0000304"/>
    <property type="project" value="Reactome"/>
</dbReference>
<dbReference type="GO" id="GO:0000015">
    <property type="term" value="C:phosphopyruvate hydratase complex"/>
    <property type="evidence" value="ECO:0000318"/>
    <property type="project" value="GO_Central"/>
</dbReference>
<dbReference type="GO" id="GO:0000287">
    <property type="term" value="F:magnesium ion binding"/>
    <property type="evidence" value="ECO:0007669"/>
    <property type="project" value="InterPro"/>
</dbReference>
<dbReference type="GO" id="GO:0004634">
    <property type="term" value="F:phosphopyruvate hydratase activity"/>
    <property type="evidence" value="ECO:0000318"/>
    <property type="project" value="GO_Central"/>
</dbReference>
<dbReference type="GO" id="GO:0006096">
    <property type="term" value="P:glycolytic process"/>
    <property type="evidence" value="ECO:0000318"/>
    <property type="project" value="GO_Central"/>
</dbReference>
<dbReference type="CDD" id="cd03313">
    <property type="entry name" value="enolase"/>
    <property type="match status" value="1"/>
</dbReference>
<dbReference type="FunFam" id="3.30.390.10:FF:000001">
    <property type="entry name" value="Enolase"/>
    <property type="match status" value="1"/>
</dbReference>
<dbReference type="FunFam" id="3.20.20.120:FF:000002">
    <property type="entry name" value="Enolase 1"/>
    <property type="match status" value="1"/>
</dbReference>
<dbReference type="Gene3D" id="3.20.20.120">
    <property type="entry name" value="Enolase-like C-terminal domain"/>
    <property type="match status" value="1"/>
</dbReference>
<dbReference type="Gene3D" id="3.30.390.10">
    <property type="entry name" value="Enolase-like, N-terminal domain"/>
    <property type="match status" value="1"/>
</dbReference>
<dbReference type="HAMAP" id="MF_00318">
    <property type="entry name" value="Enolase"/>
    <property type="match status" value="1"/>
</dbReference>
<dbReference type="InterPro" id="IPR000941">
    <property type="entry name" value="Enolase"/>
</dbReference>
<dbReference type="InterPro" id="IPR036849">
    <property type="entry name" value="Enolase-like_C_sf"/>
</dbReference>
<dbReference type="InterPro" id="IPR029017">
    <property type="entry name" value="Enolase-like_N"/>
</dbReference>
<dbReference type="InterPro" id="IPR020810">
    <property type="entry name" value="Enolase_C"/>
</dbReference>
<dbReference type="InterPro" id="IPR020809">
    <property type="entry name" value="Enolase_CS"/>
</dbReference>
<dbReference type="InterPro" id="IPR020811">
    <property type="entry name" value="Enolase_N"/>
</dbReference>
<dbReference type="NCBIfam" id="TIGR01060">
    <property type="entry name" value="eno"/>
    <property type="match status" value="1"/>
</dbReference>
<dbReference type="PANTHER" id="PTHR11902:SF12">
    <property type="entry name" value="ALPHA-ENOLASE"/>
    <property type="match status" value="1"/>
</dbReference>
<dbReference type="PANTHER" id="PTHR11902">
    <property type="entry name" value="ENOLASE"/>
    <property type="match status" value="1"/>
</dbReference>
<dbReference type="Pfam" id="PF00113">
    <property type="entry name" value="Enolase_C"/>
    <property type="match status" value="1"/>
</dbReference>
<dbReference type="Pfam" id="PF03952">
    <property type="entry name" value="Enolase_N"/>
    <property type="match status" value="1"/>
</dbReference>
<dbReference type="PIRSF" id="PIRSF001400">
    <property type="entry name" value="Enolase"/>
    <property type="match status" value="1"/>
</dbReference>
<dbReference type="PRINTS" id="PR00148">
    <property type="entry name" value="ENOLASE"/>
</dbReference>
<dbReference type="SFLD" id="SFLDF00002">
    <property type="entry name" value="enolase"/>
    <property type="match status" value="1"/>
</dbReference>
<dbReference type="SFLD" id="SFLDG00178">
    <property type="entry name" value="enolase"/>
    <property type="match status" value="1"/>
</dbReference>
<dbReference type="SMART" id="SM01192">
    <property type="entry name" value="Enolase_C"/>
    <property type="match status" value="1"/>
</dbReference>
<dbReference type="SMART" id="SM01193">
    <property type="entry name" value="Enolase_N"/>
    <property type="match status" value="1"/>
</dbReference>
<dbReference type="SUPFAM" id="SSF51604">
    <property type="entry name" value="Enolase C-terminal domain-like"/>
    <property type="match status" value="1"/>
</dbReference>
<dbReference type="SUPFAM" id="SSF54826">
    <property type="entry name" value="Enolase N-terminal domain-like"/>
    <property type="match status" value="1"/>
</dbReference>
<dbReference type="PROSITE" id="PS00164">
    <property type="entry name" value="ENOLASE"/>
    <property type="match status" value="1"/>
</dbReference>